<name>APN2_YEAST</name>
<dbReference type="EC" id="3.1.11.2" evidence="3 5"/>
<dbReference type="EMBL" id="Z35780">
    <property type="protein sequence ID" value="CAA84838.1"/>
    <property type="molecule type" value="Genomic_DNA"/>
</dbReference>
<dbReference type="EMBL" id="AY693183">
    <property type="protein sequence ID" value="AAT93202.1"/>
    <property type="molecule type" value="Genomic_DNA"/>
</dbReference>
<dbReference type="EMBL" id="BK006936">
    <property type="protein sequence ID" value="DAA07101.1"/>
    <property type="molecule type" value="Genomic_DNA"/>
</dbReference>
<dbReference type="PIR" id="S45753">
    <property type="entry name" value="S45753"/>
</dbReference>
<dbReference type="RefSeq" id="NP_009534.1">
    <property type="nucleotide sequence ID" value="NM_001178259.1"/>
</dbReference>
<dbReference type="PDB" id="7N3Y">
    <property type="method" value="X-ray"/>
    <property type="resolution" value="2.73 A"/>
    <property type="chains" value="A/B/C/D=1-407"/>
</dbReference>
<dbReference type="PDB" id="7N3Z">
    <property type="method" value="X-ray"/>
    <property type="resolution" value="1.99 A"/>
    <property type="chains" value="A=1-407"/>
</dbReference>
<dbReference type="PDBsum" id="7N3Y"/>
<dbReference type="PDBsum" id="7N3Z"/>
<dbReference type="SMR" id="P38207"/>
<dbReference type="BioGRID" id="32679">
    <property type="interactions" value="86"/>
</dbReference>
<dbReference type="DIP" id="DIP-3930N"/>
<dbReference type="FunCoup" id="P38207">
    <property type="interactions" value="577"/>
</dbReference>
<dbReference type="IntAct" id="P38207">
    <property type="interactions" value="4"/>
</dbReference>
<dbReference type="MINT" id="P38207"/>
<dbReference type="STRING" id="4932.YBL019W"/>
<dbReference type="iPTMnet" id="P38207"/>
<dbReference type="PaxDb" id="4932-YBL019W"/>
<dbReference type="PeptideAtlas" id="P38207"/>
<dbReference type="EnsemblFungi" id="YBL019W_mRNA">
    <property type="protein sequence ID" value="YBL019W"/>
    <property type="gene ID" value="YBL019W"/>
</dbReference>
<dbReference type="GeneID" id="852262"/>
<dbReference type="KEGG" id="sce:YBL019W"/>
<dbReference type="AGR" id="SGD:S000000115"/>
<dbReference type="SGD" id="S000000115">
    <property type="gene designation" value="APN2"/>
</dbReference>
<dbReference type="VEuPathDB" id="FungiDB:YBL019W"/>
<dbReference type="eggNOG" id="KOG1294">
    <property type="taxonomic scope" value="Eukaryota"/>
</dbReference>
<dbReference type="GeneTree" id="ENSGT00530000063540"/>
<dbReference type="HOGENOM" id="CLU_010374_0_0_1"/>
<dbReference type="InParanoid" id="P38207"/>
<dbReference type="OMA" id="YTVWNTL"/>
<dbReference type="OrthoDB" id="391817at2759"/>
<dbReference type="BioCyc" id="YEAST:G3O-28922-MONOMER"/>
<dbReference type="BioGRID-ORCS" id="852262">
    <property type="hits" value="2 hits in 10 CRISPR screens"/>
</dbReference>
<dbReference type="PRO" id="PR:P38207"/>
<dbReference type="Proteomes" id="UP000002311">
    <property type="component" value="Chromosome II"/>
</dbReference>
<dbReference type="RNAct" id="P38207">
    <property type="molecule type" value="protein"/>
</dbReference>
<dbReference type="GO" id="GO:0005634">
    <property type="term" value="C:nucleus"/>
    <property type="evidence" value="ECO:0000318"/>
    <property type="project" value="GO_Central"/>
</dbReference>
<dbReference type="GO" id="GO:0008408">
    <property type="term" value="F:3'-5' exonuclease activity"/>
    <property type="evidence" value="ECO:0000314"/>
    <property type="project" value="SGD"/>
</dbReference>
<dbReference type="GO" id="GO:0003677">
    <property type="term" value="F:DNA binding"/>
    <property type="evidence" value="ECO:0007669"/>
    <property type="project" value="InterPro"/>
</dbReference>
<dbReference type="GO" id="GO:0003906">
    <property type="term" value="F:DNA-(apurinic or apyrimidinic site) endonuclease activity"/>
    <property type="evidence" value="ECO:0000314"/>
    <property type="project" value="SGD"/>
</dbReference>
<dbReference type="GO" id="GO:0008311">
    <property type="term" value="F:double-stranded DNA 3'-5' DNA exonuclease activity"/>
    <property type="evidence" value="ECO:0000314"/>
    <property type="project" value="SGD"/>
</dbReference>
<dbReference type="GO" id="GO:0004519">
    <property type="term" value="F:endonuclease activity"/>
    <property type="evidence" value="ECO:0007669"/>
    <property type="project" value="InterPro"/>
</dbReference>
<dbReference type="GO" id="GO:0008081">
    <property type="term" value="F:phosphoric diester hydrolase activity"/>
    <property type="evidence" value="ECO:0000314"/>
    <property type="project" value="SGD"/>
</dbReference>
<dbReference type="GO" id="GO:0008270">
    <property type="term" value="F:zinc ion binding"/>
    <property type="evidence" value="ECO:0007669"/>
    <property type="project" value="UniProtKB-KW"/>
</dbReference>
<dbReference type="GO" id="GO:0006284">
    <property type="term" value="P:base-excision repair"/>
    <property type="evidence" value="ECO:0000316"/>
    <property type="project" value="SGD"/>
</dbReference>
<dbReference type="CDD" id="cd09088">
    <property type="entry name" value="Ape2-like_AP-endo"/>
    <property type="match status" value="1"/>
</dbReference>
<dbReference type="FunFam" id="3.60.10.10:FF:000108">
    <property type="entry name" value="AP endonuclease"/>
    <property type="match status" value="1"/>
</dbReference>
<dbReference type="Gene3D" id="3.60.10.10">
    <property type="entry name" value="Endonuclease/exonuclease/phosphatase"/>
    <property type="match status" value="1"/>
</dbReference>
<dbReference type="InterPro" id="IPR004808">
    <property type="entry name" value="AP_endonuc_1"/>
</dbReference>
<dbReference type="InterPro" id="IPR020848">
    <property type="entry name" value="AP_endonuclease_F1_CS"/>
</dbReference>
<dbReference type="InterPro" id="IPR036691">
    <property type="entry name" value="Endo/exonu/phosph_ase_sf"/>
</dbReference>
<dbReference type="InterPro" id="IPR005135">
    <property type="entry name" value="Endo/exonuclease/phosphatase"/>
</dbReference>
<dbReference type="InterPro" id="IPR010666">
    <property type="entry name" value="Znf_GRF"/>
</dbReference>
<dbReference type="PANTHER" id="PTHR22748">
    <property type="entry name" value="AP ENDONUCLEASE"/>
    <property type="match status" value="1"/>
</dbReference>
<dbReference type="PANTHER" id="PTHR22748:SF4">
    <property type="entry name" value="DNA-(APURINIC OR APYRIMIDINIC SITE) ENDONUCLEASE 2"/>
    <property type="match status" value="1"/>
</dbReference>
<dbReference type="Pfam" id="PF03372">
    <property type="entry name" value="Exo_endo_phos"/>
    <property type="match status" value="1"/>
</dbReference>
<dbReference type="Pfam" id="PF06839">
    <property type="entry name" value="Zn_ribbon_GRF"/>
    <property type="match status" value="1"/>
</dbReference>
<dbReference type="SUPFAM" id="SSF56219">
    <property type="entry name" value="DNase I-like"/>
    <property type="match status" value="1"/>
</dbReference>
<dbReference type="PROSITE" id="PS00728">
    <property type="entry name" value="AP_NUCLEASE_F1_3"/>
    <property type="match status" value="1"/>
</dbReference>
<dbReference type="PROSITE" id="PS51435">
    <property type="entry name" value="AP_NUCLEASE_F1_4"/>
    <property type="match status" value="1"/>
</dbReference>
<dbReference type="PROSITE" id="PS51999">
    <property type="entry name" value="ZF_GRF"/>
    <property type="match status" value="1"/>
</dbReference>
<gene>
    <name type="primary">APN2</name>
    <name type="synonym">ETH1</name>
    <name type="ordered locus">YBL019W</name>
    <name type="ORF">YBL0443</name>
</gene>
<comment type="function">
    <text evidence="3 5">DNA repair enzyme that cleaves apurinic/apyrimidinic (AP) sites and removes 3'-blocking groups present at single strand breaks of damaged DNA.</text>
</comment>
<comment type="catalytic activity">
    <reaction evidence="3 5">
        <text>Exonucleolytic cleavage in the 3'- to 5'-direction to yield nucleoside 5'-phosphates.</text>
        <dbReference type="EC" id="3.1.11.2"/>
    </reaction>
</comment>
<comment type="cofactor">
    <cofactor evidence="1">
        <name>Mg(2+)</name>
        <dbReference type="ChEBI" id="CHEBI:18420"/>
    </cofactor>
    <cofactor evidence="1">
        <name>Mn(2+)</name>
        <dbReference type="ChEBI" id="CHEBI:29035"/>
    </cofactor>
    <text evidence="1">Probably binds two magnesium or manganese ions per subunit.</text>
</comment>
<comment type="subcellular location">
    <subcellularLocation>
        <location>Nucleus</location>
    </subcellularLocation>
</comment>
<comment type="miscellaneous">
    <text evidence="4">Present with 414 molecules/cell in log phase SD medium.</text>
</comment>
<comment type="similarity">
    <text evidence="6">Belongs to the DNA repair enzymes AP/ExoA family.</text>
</comment>
<proteinExistence type="evidence at protein level"/>
<evidence type="ECO:0000250" key="1"/>
<evidence type="ECO:0000255" key="2">
    <source>
        <dbReference type="PROSITE-ProRule" id="PRU01343"/>
    </source>
</evidence>
<evidence type="ECO:0000269" key="3">
    <source>
    </source>
</evidence>
<evidence type="ECO:0000269" key="4">
    <source>
    </source>
</evidence>
<evidence type="ECO:0000269" key="5">
    <source>
    </source>
</evidence>
<evidence type="ECO:0000305" key="6"/>
<evidence type="ECO:0007829" key="7">
    <source>
        <dbReference type="PDB" id="7N3Y"/>
    </source>
</evidence>
<evidence type="ECO:0007829" key="8">
    <source>
        <dbReference type="PDB" id="7N3Z"/>
    </source>
</evidence>
<protein>
    <recommendedName>
        <fullName>DNA-(apurinic or apyrimidinic site) endonuclease 2</fullName>
        <ecNumber evidence="3 5">3.1.11.2</ecNumber>
    </recommendedName>
    <alternativeName>
        <fullName>AP endonuclease 2</fullName>
    </alternativeName>
    <alternativeName>
        <fullName>Apurinic-apyrimidinic endonuclease 2</fullName>
    </alternativeName>
</protein>
<accession>P38207</accession>
<accession>D6VPY1</accession>
<accession>E9P926</accession>
<reference key="1">
    <citation type="journal article" date="1994" name="EMBO J.">
        <title>Complete DNA sequence of yeast chromosome II.</title>
        <authorList>
            <person name="Feldmann H."/>
            <person name="Aigle M."/>
            <person name="Aljinovic G."/>
            <person name="Andre B."/>
            <person name="Baclet M.C."/>
            <person name="Barthe C."/>
            <person name="Baur A."/>
            <person name="Becam A.-M."/>
            <person name="Biteau N."/>
            <person name="Boles E."/>
            <person name="Brandt T."/>
            <person name="Brendel M."/>
            <person name="Brueckner M."/>
            <person name="Bussereau F."/>
            <person name="Christiansen C."/>
            <person name="Contreras R."/>
            <person name="Crouzet M."/>
            <person name="Cziepluch C."/>
            <person name="Demolis N."/>
            <person name="Delaveau T."/>
            <person name="Doignon F."/>
            <person name="Domdey H."/>
            <person name="Duesterhus S."/>
            <person name="Dubois E."/>
            <person name="Dujon B."/>
            <person name="El Bakkoury M."/>
            <person name="Entian K.-D."/>
            <person name="Feuermann M."/>
            <person name="Fiers W."/>
            <person name="Fobo G.M."/>
            <person name="Fritz C."/>
            <person name="Gassenhuber J."/>
            <person name="Glansdorff N."/>
            <person name="Goffeau A."/>
            <person name="Grivell L.A."/>
            <person name="de Haan M."/>
            <person name="Hein C."/>
            <person name="Herbert C.J."/>
            <person name="Hollenberg C.P."/>
            <person name="Holmstroem K."/>
            <person name="Jacq C."/>
            <person name="Jacquet M."/>
            <person name="Jauniaux J.-C."/>
            <person name="Jonniaux J.-L."/>
            <person name="Kallesoee T."/>
            <person name="Kiesau P."/>
            <person name="Kirchrath L."/>
            <person name="Koetter P."/>
            <person name="Korol S."/>
            <person name="Liebl S."/>
            <person name="Logghe M."/>
            <person name="Lohan A.J.E."/>
            <person name="Louis E.J."/>
            <person name="Li Z.Y."/>
            <person name="Maat M.J."/>
            <person name="Mallet L."/>
            <person name="Mannhaupt G."/>
            <person name="Messenguy F."/>
            <person name="Miosga T."/>
            <person name="Molemans F."/>
            <person name="Mueller S."/>
            <person name="Nasr F."/>
            <person name="Obermaier B."/>
            <person name="Perea J."/>
            <person name="Pierard A."/>
            <person name="Piravandi E."/>
            <person name="Pohl F.M."/>
            <person name="Pohl T.M."/>
            <person name="Potier S."/>
            <person name="Proft M."/>
            <person name="Purnelle B."/>
            <person name="Ramezani Rad M."/>
            <person name="Rieger M."/>
            <person name="Rose M."/>
            <person name="Schaaff-Gerstenschlaeger I."/>
            <person name="Scherens B."/>
            <person name="Schwarzlose C."/>
            <person name="Skala J."/>
            <person name="Slonimski P.P."/>
            <person name="Smits P.H.M."/>
            <person name="Souciet J.-L."/>
            <person name="Steensma H.Y."/>
            <person name="Stucka R."/>
            <person name="Urrestarazu L.A."/>
            <person name="van der Aart Q.J.M."/>
            <person name="Van Dyck L."/>
            <person name="Vassarotti A."/>
            <person name="Vetter I."/>
            <person name="Vierendeels F."/>
            <person name="Vissers S."/>
            <person name="Wagner G."/>
            <person name="de Wergifosse P."/>
            <person name="Wolfe K.H."/>
            <person name="Zagulski M."/>
            <person name="Zimmermann F.K."/>
            <person name="Mewes H.-W."/>
            <person name="Kleine K."/>
        </authorList>
    </citation>
    <scope>NUCLEOTIDE SEQUENCE [LARGE SCALE GENOMIC DNA]</scope>
    <source>
        <strain>ATCC 204508 / S288c</strain>
    </source>
</reference>
<reference key="2">
    <citation type="journal article" date="2014" name="G3 (Bethesda)">
        <title>The reference genome sequence of Saccharomyces cerevisiae: Then and now.</title>
        <authorList>
            <person name="Engel S.R."/>
            <person name="Dietrich F.S."/>
            <person name="Fisk D.G."/>
            <person name="Binkley G."/>
            <person name="Balakrishnan R."/>
            <person name="Costanzo M.C."/>
            <person name="Dwight S.S."/>
            <person name="Hitz B.C."/>
            <person name="Karra K."/>
            <person name="Nash R.S."/>
            <person name="Weng S."/>
            <person name="Wong E.D."/>
            <person name="Lloyd P."/>
            <person name="Skrzypek M.S."/>
            <person name="Miyasato S.R."/>
            <person name="Simison M."/>
            <person name="Cherry J.M."/>
        </authorList>
    </citation>
    <scope>GENOME REANNOTATION</scope>
    <source>
        <strain>ATCC 204508 / S288c</strain>
    </source>
</reference>
<reference key="3">
    <citation type="journal article" date="2007" name="Genome Res.">
        <title>Approaching a complete repository of sequence-verified protein-encoding clones for Saccharomyces cerevisiae.</title>
        <authorList>
            <person name="Hu Y."/>
            <person name="Rolfs A."/>
            <person name="Bhullar B."/>
            <person name="Murthy T.V.S."/>
            <person name="Zhu C."/>
            <person name="Berger M.F."/>
            <person name="Camargo A.A."/>
            <person name="Kelley F."/>
            <person name="McCarron S."/>
            <person name="Jepson D."/>
            <person name="Richardson A."/>
            <person name="Raphael J."/>
            <person name="Moreira D."/>
            <person name="Taycher E."/>
            <person name="Zuo D."/>
            <person name="Mohr S."/>
            <person name="Kane M.F."/>
            <person name="Williamson J."/>
            <person name="Simpson A.J.G."/>
            <person name="Bulyk M.L."/>
            <person name="Harlow E."/>
            <person name="Marsischky G."/>
            <person name="Kolodner R.D."/>
            <person name="LaBaer J."/>
        </authorList>
    </citation>
    <scope>NUCLEOTIDE SEQUENCE [GENOMIC DNA]</scope>
    <source>
        <strain>ATCC 204508 / S288c</strain>
    </source>
</reference>
<reference key="4">
    <citation type="journal article" date="1998" name="Genes Dev.">
        <title>Identification of APN2, the Saccharomyces cerevisiae homolog of the major human AP endonuclease HAP1, and its role in the repair of abasic sites.</title>
        <authorList>
            <person name="Johnson R.E."/>
            <person name="Torres-Ramos C.A."/>
            <person name="Izumi T."/>
            <person name="Mitra S."/>
            <person name="Prakash S."/>
            <person name="Prakash L."/>
        </authorList>
    </citation>
    <scope>FUNCTION</scope>
    <scope>CATALYTIC ACTIVITY</scope>
</reference>
<reference key="5">
    <citation type="journal article" date="2000" name="J. Biol. Chem.">
        <title>Apurinic endonuclease activity of yeast Apn2 protein.</title>
        <authorList>
            <person name="Unk I."/>
            <person name="Haracska L."/>
            <person name="Johnson R.E."/>
            <person name="Prakash S."/>
            <person name="Prakash L."/>
        </authorList>
    </citation>
    <scope>FUNCTION</scope>
    <scope>CATALYTIC ACTIVITY</scope>
</reference>
<reference key="6">
    <citation type="journal article" date="2003" name="Nature">
        <title>Global analysis of protein expression in yeast.</title>
        <authorList>
            <person name="Ghaemmaghami S."/>
            <person name="Huh W.-K."/>
            <person name="Bower K."/>
            <person name="Howson R.W."/>
            <person name="Belle A."/>
            <person name="Dephoure N."/>
            <person name="O'Shea E.K."/>
            <person name="Weissman J.S."/>
        </authorList>
    </citation>
    <scope>LEVEL OF PROTEIN EXPRESSION [LARGE SCALE ANALYSIS]</scope>
</reference>
<feature type="chain" id="PRO_0000200020" description="DNA-(apurinic or apyrimidinic site) endonuclease 2">
    <location>
        <begin position="1"/>
        <end position="520"/>
    </location>
</feature>
<feature type="zinc finger region" description="GRF-type" evidence="2">
    <location>
        <begin position="476"/>
        <end position="520"/>
    </location>
</feature>
<feature type="active site" evidence="1">
    <location>
        <position position="181"/>
    </location>
</feature>
<feature type="active site" description="Proton donor/acceptor" evidence="1">
    <location>
        <position position="222"/>
    </location>
</feature>
<feature type="binding site" evidence="1">
    <location>
        <position position="59"/>
    </location>
    <ligand>
        <name>Mg(2+)</name>
        <dbReference type="ChEBI" id="CHEBI:18420"/>
        <label>1</label>
    </ligand>
</feature>
<feature type="binding site" evidence="1">
    <location>
        <position position="222"/>
    </location>
    <ligand>
        <name>Mg(2+)</name>
        <dbReference type="ChEBI" id="CHEBI:18420"/>
        <label>2</label>
    </ligand>
</feature>
<feature type="binding site" evidence="1">
    <location>
        <position position="224"/>
    </location>
    <ligand>
        <name>Mg(2+)</name>
        <dbReference type="ChEBI" id="CHEBI:18420"/>
        <label>2</label>
    </ligand>
</feature>
<feature type="binding site" evidence="1">
    <location>
        <position position="353"/>
    </location>
    <ligand>
        <name>Mg(2+)</name>
        <dbReference type="ChEBI" id="CHEBI:18420"/>
        <label>1</label>
    </ligand>
</feature>
<feature type="binding site" evidence="2">
    <location>
        <position position="476"/>
    </location>
    <ligand>
        <name>Zn(2+)</name>
        <dbReference type="ChEBI" id="CHEBI:29105"/>
    </ligand>
</feature>
<feature type="binding site" evidence="2">
    <location>
        <position position="478"/>
    </location>
    <ligand>
        <name>Zn(2+)</name>
        <dbReference type="ChEBI" id="CHEBI:29105"/>
    </ligand>
</feature>
<feature type="binding site" evidence="2">
    <location>
        <position position="500"/>
    </location>
    <ligand>
        <name>Zn(2+)</name>
        <dbReference type="ChEBI" id="CHEBI:29105"/>
    </ligand>
</feature>
<feature type="binding site" evidence="2">
    <location>
        <position position="514"/>
    </location>
    <ligand>
        <name>Zn(2+)</name>
        <dbReference type="ChEBI" id="CHEBI:29105"/>
    </ligand>
</feature>
<feature type="site" description="Transition state stabilizer" evidence="1">
    <location>
        <position position="224"/>
    </location>
</feature>
<feature type="site" description="Important for catalytic activity" evidence="1">
    <location>
        <position position="328"/>
    </location>
</feature>
<feature type="site" description="Interaction with DNA substrate" evidence="1">
    <location>
        <position position="354"/>
    </location>
</feature>
<feature type="sequence conflict" description="In Ref. 3; AAT93202." evidence="6" ref="3">
    <original>N</original>
    <variation>D</variation>
    <location>
        <position position="15"/>
    </location>
</feature>
<feature type="strand" evidence="8">
    <location>
        <begin position="16"/>
        <end position="23"/>
    </location>
</feature>
<feature type="helix" evidence="8">
    <location>
        <begin position="27"/>
        <end position="30"/>
    </location>
</feature>
<feature type="helix" evidence="8">
    <location>
        <begin position="36"/>
        <end position="38"/>
    </location>
</feature>
<feature type="turn" evidence="8">
    <location>
        <begin position="39"/>
        <end position="41"/>
    </location>
</feature>
<feature type="helix" evidence="8">
    <location>
        <begin position="43"/>
        <end position="50"/>
    </location>
</feature>
<feature type="strand" evidence="8">
    <location>
        <begin position="53"/>
        <end position="58"/>
    </location>
</feature>
<feature type="helix" evidence="8">
    <location>
        <begin position="64"/>
        <end position="66"/>
    </location>
</feature>
<feature type="helix" evidence="8">
    <location>
        <begin position="67"/>
        <end position="70"/>
    </location>
</feature>
<feature type="strand" evidence="8">
    <location>
        <begin position="76"/>
        <end position="81"/>
    </location>
</feature>
<feature type="strand" evidence="8">
    <location>
        <begin position="92"/>
        <end position="97"/>
    </location>
</feature>
<feature type="turn" evidence="8">
    <location>
        <begin position="104"/>
        <end position="109"/>
    </location>
</feature>
<feature type="strand" evidence="8">
    <location>
        <begin position="111"/>
        <end position="120"/>
    </location>
</feature>
<feature type="strand" evidence="8">
    <location>
        <begin position="123"/>
        <end position="125"/>
    </location>
</feature>
<feature type="strand" evidence="8">
    <location>
        <begin position="127"/>
        <end position="129"/>
    </location>
</feature>
<feature type="strand" evidence="8">
    <location>
        <begin position="131"/>
        <end position="133"/>
    </location>
</feature>
<feature type="helix" evidence="8">
    <location>
        <begin position="134"/>
        <end position="136"/>
    </location>
</feature>
<feature type="turn" evidence="8">
    <location>
        <begin position="138"/>
        <end position="140"/>
    </location>
</feature>
<feature type="helix" evidence="8">
    <location>
        <begin position="154"/>
        <end position="160"/>
    </location>
</feature>
<feature type="turn" evidence="7">
    <location>
        <begin position="161"/>
        <end position="163"/>
    </location>
</feature>
<feature type="strand" evidence="8">
    <location>
        <begin position="166"/>
        <end position="171"/>
    </location>
</feature>
<feature type="helix" evidence="8">
    <location>
        <begin position="172"/>
        <end position="174"/>
    </location>
</feature>
<feature type="strand" evidence="8">
    <location>
        <begin position="175"/>
        <end position="181"/>
    </location>
</feature>
<feature type="helix" evidence="8">
    <location>
        <begin position="190"/>
        <end position="213"/>
    </location>
</feature>
<feature type="strand" evidence="8">
    <location>
        <begin position="216"/>
        <end position="222"/>
    </location>
</feature>
<feature type="helix" evidence="8">
    <location>
        <begin position="229"/>
        <end position="231"/>
    </location>
</feature>
<feature type="helix" evidence="8">
    <location>
        <begin position="233"/>
        <end position="238"/>
    </location>
</feature>
<feature type="helix" evidence="8">
    <location>
        <begin position="249"/>
        <end position="255"/>
    </location>
</feature>
<feature type="helix" evidence="8">
    <location>
        <begin position="257"/>
        <end position="265"/>
    </location>
</feature>
<feature type="helix" evidence="8">
    <location>
        <begin position="270"/>
        <end position="276"/>
    </location>
</feature>
<feature type="helix" evidence="8">
    <location>
        <begin position="285"/>
        <end position="290"/>
    </location>
</feature>
<feature type="strand" evidence="8">
    <location>
        <begin position="293"/>
        <end position="295"/>
    </location>
</feature>
<feature type="helix" evidence="8">
    <location>
        <begin position="296"/>
        <end position="301"/>
    </location>
</feature>
<feature type="turn" evidence="7">
    <location>
        <begin position="302"/>
        <end position="304"/>
    </location>
</feature>
<feature type="turn" evidence="8">
    <location>
        <begin position="314"/>
        <end position="317"/>
    </location>
</feature>
<feature type="turn" evidence="8">
    <location>
        <begin position="319"/>
        <end position="322"/>
    </location>
</feature>
<feature type="strand" evidence="8">
    <location>
        <begin position="328"/>
        <end position="333"/>
    </location>
</feature>
<feature type="helix" evidence="8">
    <location>
        <begin position="334"/>
        <end position="339"/>
    </location>
</feature>
<feature type="strand" evidence="8">
    <location>
        <begin position="340"/>
        <end position="345"/>
    </location>
</feature>
<feature type="strand" evidence="8">
    <location>
        <begin position="351"/>
        <end position="354"/>
    </location>
</feature>
<feature type="strand" evidence="8">
    <location>
        <begin position="357"/>
        <end position="361"/>
    </location>
</feature>
<feature type="helix" evidence="8">
    <location>
        <begin position="382"/>
        <end position="385"/>
    </location>
</feature>
<feature type="helix" evidence="7">
    <location>
        <begin position="388"/>
        <end position="390"/>
    </location>
</feature>
<feature type="turn" evidence="7">
    <location>
        <begin position="393"/>
        <end position="395"/>
    </location>
</feature>
<sequence length="520" mass="59445">MSSSENTLLDGKSENTIRFLTFNVNGIRTFFHYQPFSQMNQSLRSVFDFFRADIITFQELKTEKLSISKWGRVDGFYSFISIPQTRKGYSGVGCWIRIPEKNHPLYHALQVVKAEEGITGYLTIKNGKHSAISYRNDVNQGIGGYDSLDPDLDEKSALELDSEGRCVMVELACGIVIISVYCPANSNSSEEGEMFRLRFLKVLLRRVRNLDKIGKKIVLMGDVNVCRDLIDSADTLEQFSIPITDPMGGTKLEAQYRDKAIQFIINPDTPHRRIFNQILADSLLPDASKRGILIDTTRLIQTRNRLKMYTVWNMLKNLRPSNYGSRIDFILVSLKLERCIKAADILPDILGSDHCPVYSDLDILDDRIEPGTTQVPIPKFEARYKYNLRNHNVLEMFAKKDTNKESNKQKYCVSKVMNTKKNSNIKNKSLDSFFQKVNGEKDDRIKESSEIPQQAKKRISTPKLNFKDVFGKPPLCRHGEESMLKTSKTSANPGRKFWICKRSRGDSNNTESSCGFFQWV</sequence>
<organism>
    <name type="scientific">Saccharomyces cerevisiae (strain ATCC 204508 / S288c)</name>
    <name type="common">Baker's yeast</name>
    <dbReference type="NCBI Taxonomy" id="559292"/>
    <lineage>
        <taxon>Eukaryota</taxon>
        <taxon>Fungi</taxon>
        <taxon>Dikarya</taxon>
        <taxon>Ascomycota</taxon>
        <taxon>Saccharomycotina</taxon>
        <taxon>Saccharomycetes</taxon>
        <taxon>Saccharomycetales</taxon>
        <taxon>Saccharomycetaceae</taxon>
        <taxon>Saccharomyces</taxon>
    </lineage>
</organism>
<keyword id="KW-0002">3D-structure</keyword>
<keyword id="KW-0227">DNA damage</keyword>
<keyword id="KW-0234">DNA repair</keyword>
<keyword id="KW-0378">Hydrolase</keyword>
<keyword id="KW-0460">Magnesium</keyword>
<keyword id="KW-0479">Metal-binding</keyword>
<keyword id="KW-0539">Nucleus</keyword>
<keyword id="KW-1185">Reference proteome</keyword>
<keyword id="KW-0862">Zinc</keyword>
<keyword id="KW-0863">Zinc-finger</keyword>